<keyword id="KW-0488">Methylation</keyword>
<keyword id="KW-0489">Methyltransferase</keyword>
<keyword id="KW-0539">Nucleus</keyword>
<keyword id="KW-1185">Reference proteome</keyword>
<keyword id="KW-0687">Ribonucleoprotein</keyword>
<keyword id="KW-0694">RNA-binding</keyword>
<keyword id="KW-0698">rRNA processing</keyword>
<keyword id="KW-0949">S-adenosyl-L-methionine</keyword>
<keyword id="KW-0808">Transferase</keyword>
<dbReference type="EC" id="2.1.1.-"/>
<dbReference type="EMBL" id="AAFI02000005">
    <property type="protein sequence ID" value="EAL72289.1"/>
    <property type="molecule type" value="Genomic_DNA"/>
</dbReference>
<dbReference type="RefSeq" id="XP_646371.1">
    <property type="nucleotide sequence ID" value="XM_641279.1"/>
</dbReference>
<dbReference type="SMR" id="Q55CW0"/>
<dbReference type="FunCoup" id="Q55CW0">
    <property type="interactions" value="580"/>
</dbReference>
<dbReference type="STRING" id="44689.Q55CW0"/>
<dbReference type="PaxDb" id="44689-DDB0267046"/>
<dbReference type="EnsemblProtists" id="EAL72289">
    <property type="protein sequence ID" value="EAL72289"/>
    <property type="gene ID" value="DDB_G0269878"/>
</dbReference>
<dbReference type="GeneID" id="8617326"/>
<dbReference type="KEGG" id="ddi:DDB_G0269878"/>
<dbReference type="dictyBase" id="DDB_G0269878">
    <property type="gene designation" value="fbl"/>
</dbReference>
<dbReference type="VEuPathDB" id="AmoebaDB:DDB_G0269878"/>
<dbReference type="eggNOG" id="KOG1596">
    <property type="taxonomic scope" value="Eukaryota"/>
</dbReference>
<dbReference type="HOGENOM" id="CLU_059055_1_0_1"/>
<dbReference type="InParanoid" id="Q55CW0"/>
<dbReference type="OMA" id="WNPNKSK"/>
<dbReference type="PhylomeDB" id="Q55CW0"/>
<dbReference type="Reactome" id="R-DDI-6791226">
    <property type="pathway name" value="Major pathway of rRNA processing in the nucleolus and cytosol"/>
</dbReference>
<dbReference type="PRO" id="PR:Q55CW0"/>
<dbReference type="Proteomes" id="UP000002195">
    <property type="component" value="Chromosome 1"/>
</dbReference>
<dbReference type="GO" id="GO:0031428">
    <property type="term" value="C:box C/D methylation guide snoRNP complex"/>
    <property type="evidence" value="ECO:0000318"/>
    <property type="project" value="GO_Central"/>
</dbReference>
<dbReference type="GO" id="GO:0005730">
    <property type="term" value="C:nucleolus"/>
    <property type="evidence" value="ECO:0000250"/>
    <property type="project" value="dictyBase"/>
</dbReference>
<dbReference type="GO" id="GO:0032040">
    <property type="term" value="C:small-subunit processome"/>
    <property type="evidence" value="ECO:0000250"/>
    <property type="project" value="UniProtKB"/>
</dbReference>
<dbReference type="GO" id="GO:1990259">
    <property type="term" value="F:histone H2AQ104 methyltransferase activity"/>
    <property type="evidence" value="ECO:0000318"/>
    <property type="project" value="GO_Central"/>
</dbReference>
<dbReference type="GO" id="GO:0003723">
    <property type="term" value="F:RNA binding"/>
    <property type="evidence" value="ECO:0000318"/>
    <property type="project" value="GO_Central"/>
</dbReference>
<dbReference type="GO" id="GO:0008649">
    <property type="term" value="F:rRNA methyltransferase activity"/>
    <property type="evidence" value="ECO:0000318"/>
    <property type="project" value="GO_Central"/>
</dbReference>
<dbReference type="GO" id="GO:0000494">
    <property type="term" value="P:box C/D sno(s)RNA 3'-end processing"/>
    <property type="evidence" value="ECO:0000318"/>
    <property type="project" value="GO_Central"/>
</dbReference>
<dbReference type="GO" id="GO:0042274">
    <property type="term" value="P:ribosomal small subunit biogenesis"/>
    <property type="evidence" value="ECO:0000250"/>
    <property type="project" value="UniProtKB"/>
</dbReference>
<dbReference type="GO" id="GO:0031167">
    <property type="term" value="P:rRNA methylation"/>
    <property type="evidence" value="ECO:0000318"/>
    <property type="project" value="GO_Central"/>
</dbReference>
<dbReference type="GO" id="GO:0016074">
    <property type="term" value="P:sno(s)RNA metabolic process"/>
    <property type="evidence" value="ECO:0000250"/>
    <property type="project" value="dictyBase"/>
</dbReference>
<dbReference type="FunFam" id="3.30.200.20:FF:000056">
    <property type="entry name" value="Fibrillarin like 1"/>
    <property type="match status" value="1"/>
</dbReference>
<dbReference type="FunFam" id="3.40.50.150:FF:000001">
    <property type="entry name" value="Fibrillarin like 1"/>
    <property type="match status" value="1"/>
</dbReference>
<dbReference type="Gene3D" id="3.30.200.20">
    <property type="entry name" value="Phosphorylase Kinase, domain 1"/>
    <property type="match status" value="1"/>
</dbReference>
<dbReference type="Gene3D" id="3.40.50.150">
    <property type="entry name" value="Vaccinia Virus protein VP39"/>
    <property type="match status" value="1"/>
</dbReference>
<dbReference type="HAMAP" id="MF_00351">
    <property type="entry name" value="RNA_methyltransf_FlpA"/>
    <property type="match status" value="1"/>
</dbReference>
<dbReference type="InterPro" id="IPR000692">
    <property type="entry name" value="Fibrillarin"/>
</dbReference>
<dbReference type="InterPro" id="IPR029063">
    <property type="entry name" value="SAM-dependent_MTases_sf"/>
</dbReference>
<dbReference type="NCBIfam" id="NF003276">
    <property type="entry name" value="PRK04266.1-2"/>
    <property type="match status" value="1"/>
</dbReference>
<dbReference type="PANTHER" id="PTHR10335:SF17">
    <property type="entry name" value="FIBRILLARIN"/>
    <property type="match status" value="1"/>
</dbReference>
<dbReference type="PANTHER" id="PTHR10335">
    <property type="entry name" value="RRNA 2-O-METHYLTRANSFERASE FIBRILLARIN"/>
    <property type="match status" value="1"/>
</dbReference>
<dbReference type="Pfam" id="PF01269">
    <property type="entry name" value="Fibrillarin"/>
    <property type="match status" value="1"/>
</dbReference>
<dbReference type="PRINTS" id="PR00052">
    <property type="entry name" value="FIBRILLARIN"/>
</dbReference>
<dbReference type="SMART" id="SM01206">
    <property type="entry name" value="Fibrillarin"/>
    <property type="match status" value="1"/>
</dbReference>
<dbReference type="SUPFAM" id="SSF53335">
    <property type="entry name" value="S-adenosyl-L-methionine-dependent methyltransferases"/>
    <property type="match status" value="1"/>
</dbReference>
<evidence type="ECO:0000250" key="1"/>
<evidence type="ECO:0000250" key="2">
    <source>
        <dbReference type="UniProtKB" id="P22087"/>
    </source>
</evidence>
<evidence type="ECO:0000256" key="3">
    <source>
        <dbReference type="SAM" id="MobiDB-lite"/>
    </source>
</evidence>
<evidence type="ECO:0000305" key="4"/>
<proteinExistence type="inferred from homology"/>
<sequence>MEGRGGSRGGAMARGGGRGGFGGGRGGFGGGDRGGRGGGRGGFGGGDRGGRGGFGGGRGGRGGFGGGDRGGRGGARGGRGGARGGKPAAGGKPGAKVIVEKHPRHEGVFIVRGKEESLATLNSVPGESVYGEKRVSVGEGEDKKEYRIWNPFRSKIAAGLHRGVDEIHIKPGSKVLYIGAASGTTISHVSDIVGPTGVVYGIELSHRPGRDLIGMAKKRTNVIPIIEDARHPQKYRMLIGMVDVVFADVAQPNQAQIVAQNSAYFLKNEGHFIISIKASCIDSTAPTEVVVQNEITKLKKEKLRPQHLLKTLDPYERNHSLVIGVYRKFGSSEK</sequence>
<name>FBRL_DICDI</name>
<protein>
    <recommendedName>
        <fullName>rRNA 2'-O-methyltransferase fibrillarin</fullName>
        <ecNumber>2.1.1.-</ecNumber>
    </recommendedName>
    <alternativeName>
        <fullName>Histone-glutamine methyltransferase</fullName>
    </alternativeName>
</protein>
<organism>
    <name type="scientific">Dictyostelium discoideum</name>
    <name type="common">Social amoeba</name>
    <dbReference type="NCBI Taxonomy" id="44689"/>
    <lineage>
        <taxon>Eukaryota</taxon>
        <taxon>Amoebozoa</taxon>
        <taxon>Evosea</taxon>
        <taxon>Eumycetozoa</taxon>
        <taxon>Dictyostelia</taxon>
        <taxon>Dictyosteliales</taxon>
        <taxon>Dictyosteliaceae</taxon>
        <taxon>Dictyostelium</taxon>
    </lineage>
</organism>
<feature type="chain" id="PRO_0000331764" description="rRNA 2'-O-methyltransferase fibrillarin">
    <location>
        <begin position="1"/>
        <end position="334"/>
    </location>
</feature>
<feature type="region of interest" description="Disordered" evidence="3">
    <location>
        <begin position="1"/>
        <end position="94"/>
    </location>
</feature>
<feature type="compositionally biased region" description="Gly residues" evidence="3">
    <location>
        <begin position="1"/>
        <end position="93"/>
    </location>
</feature>
<feature type="binding site" evidence="1">
    <location>
        <begin position="184"/>
        <end position="185"/>
    </location>
    <ligand>
        <name>S-adenosyl-L-methionine</name>
        <dbReference type="ChEBI" id="CHEBI:59789"/>
    </ligand>
</feature>
<feature type="binding site" evidence="1">
    <location>
        <begin position="203"/>
        <end position="204"/>
    </location>
    <ligand>
        <name>S-adenosyl-L-methionine</name>
        <dbReference type="ChEBI" id="CHEBI:59789"/>
    </ligand>
</feature>
<feature type="binding site" evidence="1">
    <location>
        <begin position="228"/>
        <end position="229"/>
    </location>
    <ligand>
        <name>S-adenosyl-L-methionine</name>
        <dbReference type="ChEBI" id="CHEBI:59789"/>
    </ligand>
</feature>
<feature type="binding site" evidence="1">
    <location>
        <begin position="248"/>
        <end position="251"/>
    </location>
    <ligand>
        <name>S-adenosyl-L-methionine</name>
        <dbReference type="ChEBI" id="CHEBI:59789"/>
    </ligand>
</feature>
<accession>Q55CW0</accession>
<reference key="1">
    <citation type="journal article" date="2005" name="Nature">
        <title>The genome of the social amoeba Dictyostelium discoideum.</title>
        <authorList>
            <person name="Eichinger L."/>
            <person name="Pachebat J.A."/>
            <person name="Gloeckner G."/>
            <person name="Rajandream M.A."/>
            <person name="Sucgang R."/>
            <person name="Berriman M."/>
            <person name="Song J."/>
            <person name="Olsen R."/>
            <person name="Szafranski K."/>
            <person name="Xu Q."/>
            <person name="Tunggal B."/>
            <person name="Kummerfeld S."/>
            <person name="Madera M."/>
            <person name="Konfortov B.A."/>
            <person name="Rivero F."/>
            <person name="Bankier A.T."/>
            <person name="Lehmann R."/>
            <person name="Hamlin N."/>
            <person name="Davies R."/>
            <person name="Gaudet P."/>
            <person name="Fey P."/>
            <person name="Pilcher K."/>
            <person name="Chen G."/>
            <person name="Saunders D."/>
            <person name="Sodergren E.J."/>
            <person name="Davis P."/>
            <person name="Kerhornou A."/>
            <person name="Nie X."/>
            <person name="Hall N."/>
            <person name="Anjard C."/>
            <person name="Hemphill L."/>
            <person name="Bason N."/>
            <person name="Farbrother P."/>
            <person name="Desany B."/>
            <person name="Just E."/>
            <person name="Morio T."/>
            <person name="Rost R."/>
            <person name="Churcher C.M."/>
            <person name="Cooper J."/>
            <person name="Haydock S."/>
            <person name="van Driessche N."/>
            <person name="Cronin A."/>
            <person name="Goodhead I."/>
            <person name="Muzny D.M."/>
            <person name="Mourier T."/>
            <person name="Pain A."/>
            <person name="Lu M."/>
            <person name="Harper D."/>
            <person name="Lindsay R."/>
            <person name="Hauser H."/>
            <person name="James K.D."/>
            <person name="Quiles M."/>
            <person name="Madan Babu M."/>
            <person name="Saito T."/>
            <person name="Buchrieser C."/>
            <person name="Wardroper A."/>
            <person name="Felder M."/>
            <person name="Thangavelu M."/>
            <person name="Johnson D."/>
            <person name="Knights A."/>
            <person name="Loulseged H."/>
            <person name="Mungall K.L."/>
            <person name="Oliver K."/>
            <person name="Price C."/>
            <person name="Quail M.A."/>
            <person name="Urushihara H."/>
            <person name="Hernandez J."/>
            <person name="Rabbinowitsch E."/>
            <person name="Steffen D."/>
            <person name="Sanders M."/>
            <person name="Ma J."/>
            <person name="Kohara Y."/>
            <person name="Sharp S."/>
            <person name="Simmonds M.N."/>
            <person name="Spiegler S."/>
            <person name="Tivey A."/>
            <person name="Sugano S."/>
            <person name="White B."/>
            <person name="Walker D."/>
            <person name="Woodward J.R."/>
            <person name="Winckler T."/>
            <person name="Tanaka Y."/>
            <person name="Shaulsky G."/>
            <person name="Schleicher M."/>
            <person name="Weinstock G.M."/>
            <person name="Rosenthal A."/>
            <person name="Cox E.C."/>
            <person name="Chisholm R.L."/>
            <person name="Gibbs R.A."/>
            <person name="Loomis W.F."/>
            <person name="Platzer M."/>
            <person name="Kay R.R."/>
            <person name="Williams J.G."/>
            <person name="Dear P.H."/>
            <person name="Noegel A.A."/>
            <person name="Barrell B.G."/>
            <person name="Kuspa A."/>
        </authorList>
    </citation>
    <scope>NUCLEOTIDE SEQUENCE [LARGE SCALE GENOMIC DNA]</scope>
    <source>
        <strain>AX4</strain>
    </source>
</reference>
<comment type="function">
    <text evidence="2">S-adenosyl-L-methionine-dependent methyltransferase that has the ability to methylate both RNAs and proteins. Involved in pre-rRNA processing. Utilizes the methyl donor S-adenosyl-L-methionine to catalyze the site-specific 2'-hydroxyl methylation of ribose moieties in pre-ribosomal RNA. Site specificity is provided by a guide RNA that base pairs with the substrate. Methylation occurs at a characteristic distance from the sequence involved in base pairing with the guide RNA. Also acts as a protein methyltransferase by mediating methylation of 'Gln-105' of histone H2A (H2AQ105me), a modification that impairs binding of the FACT complex and is specifically present at 35S ribosomal DNA locus (By similarity). Part of the small subunit (SSU) processome, first precursor of the small eukaryotic ribosomal subunit. During the assembly of the SSU processome in the nucleolus, many ribosome biogenesis factors, an RNA chaperone and ribosomal proteins associate with the nascent pre-rRNA and work in concert to generate RNA folding, modifications, rearrangements and cleavage as well as targeted degradation of pre-ribosomal RNA by the RNA exosome (By similarity).</text>
</comment>
<comment type="catalytic activity">
    <reaction>
        <text>L-glutaminyl-[histone H2A] + S-adenosyl-L-methionine = N(5)-methyl-L-glutaminyl-[histone H2A] + S-adenosyl-L-homocysteine + H(+)</text>
        <dbReference type="Rhea" id="RHEA:50904"/>
        <dbReference type="Rhea" id="RHEA-COMP:12837"/>
        <dbReference type="Rhea" id="RHEA-COMP:12839"/>
        <dbReference type="ChEBI" id="CHEBI:15378"/>
        <dbReference type="ChEBI" id="CHEBI:30011"/>
        <dbReference type="ChEBI" id="CHEBI:57856"/>
        <dbReference type="ChEBI" id="CHEBI:59789"/>
        <dbReference type="ChEBI" id="CHEBI:61891"/>
    </reaction>
</comment>
<comment type="subunit">
    <text evidence="2">Component of box C/D small nucleolar ribonucleoprotein (snoRNP) particles. It is associated with the U3, U8 and U13 small nuclear RNAs (By similarity). Part of the small subunit (SSU) processome, composed of more than 70 proteins and the RNA chaperone small nucleolar RNA (snoRNA) U3 (By similarity).</text>
</comment>
<comment type="subcellular location">
    <subcellularLocation>
        <location evidence="2">Nucleus</location>
        <location evidence="2">Nucleolus</location>
    </subcellularLocation>
    <text evidence="2">Fibrillar region of the nucleolus.</text>
</comment>
<comment type="PTM">
    <text evidence="2">By homology to other fibrillarins, some or all of the N-terminal domain arginines are modified to asymmetric dimethylarginine (DMA).</text>
</comment>
<comment type="similarity">
    <text evidence="4">Belongs to the methyltransferase superfamily. Fibrillarin family.</text>
</comment>
<gene>
    <name type="primary">fbl</name>
    <name type="ORF">DDB_G0269878</name>
</gene>